<gene>
    <name evidence="1" type="primary">rph</name>
    <name type="ordered locus">Ssed_0378</name>
</gene>
<organism>
    <name type="scientific">Shewanella sediminis (strain HAW-EB3)</name>
    <dbReference type="NCBI Taxonomy" id="425104"/>
    <lineage>
        <taxon>Bacteria</taxon>
        <taxon>Pseudomonadati</taxon>
        <taxon>Pseudomonadota</taxon>
        <taxon>Gammaproteobacteria</taxon>
        <taxon>Alteromonadales</taxon>
        <taxon>Shewanellaceae</taxon>
        <taxon>Shewanella</taxon>
    </lineage>
</organism>
<feature type="chain" id="PRO_1000082306" description="Ribonuclease PH">
    <location>
        <begin position="1"/>
        <end position="237"/>
    </location>
</feature>
<feature type="binding site" evidence="1">
    <location>
        <position position="86"/>
    </location>
    <ligand>
        <name>phosphate</name>
        <dbReference type="ChEBI" id="CHEBI:43474"/>
        <note>substrate</note>
    </ligand>
</feature>
<feature type="binding site" evidence="1">
    <location>
        <begin position="124"/>
        <end position="126"/>
    </location>
    <ligand>
        <name>phosphate</name>
        <dbReference type="ChEBI" id="CHEBI:43474"/>
        <note>substrate</note>
    </ligand>
</feature>
<name>RNPH_SHESH</name>
<reference key="1">
    <citation type="submission" date="2007-08" db="EMBL/GenBank/DDBJ databases">
        <title>Complete sequence of Shewanella sediminis HAW-EB3.</title>
        <authorList>
            <consortium name="US DOE Joint Genome Institute"/>
            <person name="Copeland A."/>
            <person name="Lucas S."/>
            <person name="Lapidus A."/>
            <person name="Barry K."/>
            <person name="Glavina del Rio T."/>
            <person name="Dalin E."/>
            <person name="Tice H."/>
            <person name="Pitluck S."/>
            <person name="Chertkov O."/>
            <person name="Brettin T."/>
            <person name="Bruce D."/>
            <person name="Detter J.C."/>
            <person name="Han C."/>
            <person name="Schmutz J."/>
            <person name="Larimer F."/>
            <person name="Land M."/>
            <person name="Hauser L."/>
            <person name="Kyrpides N."/>
            <person name="Kim E."/>
            <person name="Zhao J.-S."/>
            <person name="Richardson P."/>
        </authorList>
    </citation>
    <scope>NUCLEOTIDE SEQUENCE [LARGE SCALE GENOMIC DNA]</scope>
    <source>
        <strain>HAW-EB3</strain>
    </source>
</reference>
<accession>A8FQ68</accession>
<sequence length="237" mass="25746">MRPSDRTPAQSRPVTITRQFTAHAEGSVLVEFGDTKVLCTASFEEGVPRFLKGKGQGWVTAEYGMLPRSTHSRMNREAARGKQSGRTQEIQRLIGRSLRAAVDMKALGENTIVIDCDVIQADGGTRTAAITGACVALVDSLNWARGKGILKTNPLKFLIAAVSVGIYKGEPICDLEYIEDSEAETDMNVVMTETGKMIEIQGTAEGEPFSHEELLSLLELAKHGIREIVDIQKAALS</sequence>
<keyword id="KW-0548">Nucleotidyltransferase</keyword>
<keyword id="KW-1185">Reference proteome</keyword>
<keyword id="KW-0694">RNA-binding</keyword>
<keyword id="KW-0698">rRNA processing</keyword>
<keyword id="KW-0808">Transferase</keyword>
<keyword id="KW-0819">tRNA processing</keyword>
<keyword id="KW-0820">tRNA-binding</keyword>
<comment type="function">
    <text evidence="1">Phosphorolytic 3'-5' exoribonuclease that plays an important role in tRNA 3'-end maturation. Removes nucleotide residues following the 3'-CCA terminus of tRNAs; can also add nucleotides to the ends of RNA molecules by using nucleoside diphosphates as substrates, but this may not be physiologically important. Probably plays a role in initiation of 16S rRNA degradation (leading to ribosome degradation) during starvation.</text>
</comment>
<comment type="catalytic activity">
    <reaction evidence="1">
        <text>tRNA(n+1) + phosphate = tRNA(n) + a ribonucleoside 5'-diphosphate</text>
        <dbReference type="Rhea" id="RHEA:10628"/>
        <dbReference type="Rhea" id="RHEA-COMP:17343"/>
        <dbReference type="Rhea" id="RHEA-COMP:17344"/>
        <dbReference type="ChEBI" id="CHEBI:43474"/>
        <dbReference type="ChEBI" id="CHEBI:57930"/>
        <dbReference type="ChEBI" id="CHEBI:173114"/>
        <dbReference type="EC" id="2.7.7.56"/>
    </reaction>
</comment>
<comment type="subunit">
    <text evidence="1">Homohexameric ring arranged as a trimer of dimers.</text>
</comment>
<comment type="similarity">
    <text evidence="1">Belongs to the RNase PH family.</text>
</comment>
<protein>
    <recommendedName>
        <fullName evidence="1">Ribonuclease PH</fullName>
        <shortName evidence="1">RNase PH</shortName>
        <ecNumber evidence="1">2.7.7.56</ecNumber>
    </recommendedName>
    <alternativeName>
        <fullName evidence="1">tRNA nucleotidyltransferase</fullName>
    </alternativeName>
</protein>
<evidence type="ECO:0000255" key="1">
    <source>
        <dbReference type="HAMAP-Rule" id="MF_00564"/>
    </source>
</evidence>
<proteinExistence type="inferred from homology"/>
<dbReference type="EC" id="2.7.7.56" evidence="1"/>
<dbReference type="EMBL" id="CP000821">
    <property type="protein sequence ID" value="ABV34991.1"/>
    <property type="molecule type" value="Genomic_DNA"/>
</dbReference>
<dbReference type="RefSeq" id="WP_012140729.1">
    <property type="nucleotide sequence ID" value="NC_009831.1"/>
</dbReference>
<dbReference type="SMR" id="A8FQ68"/>
<dbReference type="STRING" id="425104.Ssed_0378"/>
<dbReference type="KEGG" id="sse:Ssed_0378"/>
<dbReference type="eggNOG" id="COG0689">
    <property type="taxonomic scope" value="Bacteria"/>
</dbReference>
<dbReference type="HOGENOM" id="CLU_050858_0_0_6"/>
<dbReference type="OrthoDB" id="9802265at2"/>
<dbReference type="Proteomes" id="UP000002015">
    <property type="component" value="Chromosome"/>
</dbReference>
<dbReference type="GO" id="GO:0000175">
    <property type="term" value="F:3'-5'-RNA exonuclease activity"/>
    <property type="evidence" value="ECO:0007669"/>
    <property type="project" value="UniProtKB-UniRule"/>
</dbReference>
<dbReference type="GO" id="GO:0000049">
    <property type="term" value="F:tRNA binding"/>
    <property type="evidence" value="ECO:0007669"/>
    <property type="project" value="UniProtKB-UniRule"/>
</dbReference>
<dbReference type="GO" id="GO:0009022">
    <property type="term" value="F:tRNA nucleotidyltransferase activity"/>
    <property type="evidence" value="ECO:0007669"/>
    <property type="project" value="UniProtKB-UniRule"/>
</dbReference>
<dbReference type="GO" id="GO:0016075">
    <property type="term" value="P:rRNA catabolic process"/>
    <property type="evidence" value="ECO:0007669"/>
    <property type="project" value="UniProtKB-UniRule"/>
</dbReference>
<dbReference type="GO" id="GO:0006364">
    <property type="term" value="P:rRNA processing"/>
    <property type="evidence" value="ECO:0007669"/>
    <property type="project" value="UniProtKB-KW"/>
</dbReference>
<dbReference type="GO" id="GO:0008033">
    <property type="term" value="P:tRNA processing"/>
    <property type="evidence" value="ECO:0007669"/>
    <property type="project" value="UniProtKB-UniRule"/>
</dbReference>
<dbReference type="CDD" id="cd11362">
    <property type="entry name" value="RNase_PH_bact"/>
    <property type="match status" value="1"/>
</dbReference>
<dbReference type="FunFam" id="3.30.230.70:FF:000003">
    <property type="entry name" value="Ribonuclease PH"/>
    <property type="match status" value="1"/>
</dbReference>
<dbReference type="Gene3D" id="3.30.230.70">
    <property type="entry name" value="GHMP Kinase, N-terminal domain"/>
    <property type="match status" value="1"/>
</dbReference>
<dbReference type="HAMAP" id="MF_00564">
    <property type="entry name" value="RNase_PH"/>
    <property type="match status" value="1"/>
</dbReference>
<dbReference type="InterPro" id="IPR001247">
    <property type="entry name" value="ExoRNase_PH_dom1"/>
</dbReference>
<dbReference type="InterPro" id="IPR015847">
    <property type="entry name" value="ExoRNase_PH_dom2"/>
</dbReference>
<dbReference type="InterPro" id="IPR036345">
    <property type="entry name" value="ExoRNase_PH_dom2_sf"/>
</dbReference>
<dbReference type="InterPro" id="IPR027408">
    <property type="entry name" value="PNPase/RNase_PH_dom_sf"/>
</dbReference>
<dbReference type="InterPro" id="IPR020568">
    <property type="entry name" value="Ribosomal_Su5_D2-typ_SF"/>
</dbReference>
<dbReference type="InterPro" id="IPR050080">
    <property type="entry name" value="RNase_PH"/>
</dbReference>
<dbReference type="InterPro" id="IPR002381">
    <property type="entry name" value="RNase_PH_bac-type"/>
</dbReference>
<dbReference type="InterPro" id="IPR018336">
    <property type="entry name" value="RNase_PH_CS"/>
</dbReference>
<dbReference type="NCBIfam" id="TIGR01966">
    <property type="entry name" value="RNasePH"/>
    <property type="match status" value="1"/>
</dbReference>
<dbReference type="PANTHER" id="PTHR11953">
    <property type="entry name" value="EXOSOME COMPLEX COMPONENT"/>
    <property type="match status" value="1"/>
</dbReference>
<dbReference type="PANTHER" id="PTHR11953:SF0">
    <property type="entry name" value="EXOSOME COMPLEX COMPONENT RRP41"/>
    <property type="match status" value="1"/>
</dbReference>
<dbReference type="Pfam" id="PF01138">
    <property type="entry name" value="RNase_PH"/>
    <property type="match status" value="1"/>
</dbReference>
<dbReference type="Pfam" id="PF03725">
    <property type="entry name" value="RNase_PH_C"/>
    <property type="match status" value="1"/>
</dbReference>
<dbReference type="SUPFAM" id="SSF55666">
    <property type="entry name" value="Ribonuclease PH domain 2-like"/>
    <property type="match status" value="1"/>
</dbReference>
<dbReference type="SUPFAM" id="SSF54211">
    <property type="entry name" value="Ribosomal protein S5 domain 2-like"/>
    <property type="match status" value="1"/>
</dbReference>
<dbReference type="PROSITE" id="PS01277">
    <property type="entry name" value="RIBONUCLEASE_PH"/>
    <property type="match status" value="1"/>
</dbReference>